<evidence type="ECO:0000255" key="1">
    <source>
        <dbReference type="HAMAP-Rule" id="MF_00388"/>
    </source>
</evidence>
<comment type="function">
    <text evidence="1">Catalyzes the hydrolysis of UDP-3-O-myristoyl-N-acetylglucosamine to form UDP-3-O-myristoylglucosamine and acetate, the committed step in lipid A biosynthesis.</text>
</comment>
<comment type="catalytic activity">
    <reaction evidence="1">
        <text>a UDP-3-O-[(3R)-3-hydroxyacyl]-N-acetyl-alpha-D-glucosamine + H2O = a UDP-3-O-[(3R)-3-hydroxyacyl]-alpha-D-glucosamine + acetate</text>
        <dbReference type="Rhea" id="RHEA:67816"/>
        <dbReference type="ChEBI" id="CHEBI:15377"/>
        <dbReference type="ChEBI" id="CHEBI:30089"/>
        <dbReference type="ChEBI" id="CHEBI:137740"/>
        <dbReference type="ChEBI" id="CHEBI:173225"/>
        <dbReference type="EC" id="3.5.1.108"/>
    </reaction>
</comment>
<comment type="cofactor">
    <cofactor evidence="1">
        <name>Zn(2+)</name>
        <dbReference type="ChEBI" id="CHEBI:29105"/>
    </cofactor>
</comment>
<comment type="pathway">
    <text evidence="1">Glycolipid biosynthesis; lipid IV(A) biosynthesis; lipid IV(A) from (3R)-3-hydroxytetradecanoyl-[acyl-carrier-protein] and UDP-N-acetyl-alpha-D-glucosamine: step 2/6.</text>
</comment>
<comment type="similarity">
    <text evidence="1">Belongs to the LpxC family.</text>
</comment>
<sequence>MIRQRTLKEIVKTTGVGLHSGRKVTLTLRPAAANTGIIYRRTDVNPPVDFPADPASVRDTMLCTALVNDEGVRISTVEHLNAALAGMGIDNIIVEVDAPEIPIMDGSASPFVYLLQQAGIETQNVPKRFIRIKKPVRFEDGDKWAEFVPFNGFRMDFEIEFNHPAIESDEQRLLFDFSSQGFVREISRARTFGFMRDIEYLQSQNLVLGGSFDNAIVLDDYRILNEEGLRFDNEFVTHKLLDAIGDLYMCGHAIIGEFRAFKSGHGLNNQLLRAVLADQEAWEWTTFEEEEGSPVAFAQPNMVLA</sequence>
<organism>
    <name type="scientific">Vibrio campbellii (strain ATCC BAA-1116)</name>
    <dbReference type="NCBI Taxonomy" id="2902295"/>
    <lineage>
        <taxon>Bacteria</taxon>
        <taxon>Pseudomonadati</taxon>
        <taxon>Pseudomonadota</taxon>
        <taxon>Gammaproteobacteria</taxon>
        <taxon>Vibrionales</taxon>
        <taxon>Vibrionaceae</taxon>
        <taxon>Vibrio</taxon>
    </lineage>
</organism>
<protein>
    <recommendedName>
        <fullName evidence="1">UDP-3-O-acyl-N-acetylglucosamine deacetylase</fullName>
        <shortName evidence="1">UDP-3-O-acyl-GlcNAc deacetylase</shortName>
        <ecNumber evidence="1">3.5.1.108</ecNumber>
    </recommendedName>
    <alternativeName>
        <fullName evidence="1">UDP-3-O-[R-3-hydroxymyristoyl]-N-acetylglucosamine deacetylase</fullName>
    </alternativeName>
</protein>
<dbReference type="EC" id="3.5.1.108" evidence="1"/>
<dbReference type="EMBL" id="CP000789">
    <property type="protein sequence ID" value="ABU69906.1"/>
    <property type="molecule type" value="Genomic_DNA"/>
</dbReference>
<dbReference type="RefSeq" id="WP_012126990.1">
    <property type="nucleotide sequence ID" value="NC_009783.1"/>
</dbReference>
<dbReference type="SMR" id="A7MXQ6"/>
<dbReference type="KEGG" id="vha:VIBHAR_00907"/>
<dbReference type="PATRIC" id="fig|338187.25.peg.1711"/>
<dbReference type="UniPathway" id="UPA00359">
    <property type="reaction ID" value="UER00478"/>
</dbReference>
<dbReference type="Proteomes" id="UP000008152">
    <property type="component" value="Chromosome I"/>
</dbReference>
<dbReference type="GO" id="GO:0016020">
    <property type="term" value="C:membrane"/>
    <property type="evidence" value="ECO:0007669"/>
    <property type="project" value="GOC"/>
</dbReference>
<dbReference type="GO" id="GO:0046872">
    <property type="term" value="F:metal ion binding"/>
    <property type="evidence" value="ECO:0007669"/>
    <property type="project" value="UniProtKB-KW"/>
</dbReference>
<dbReference type="GO" id="GO:0103117">
    <property type="term" value="F:UDP-3-O-acyl-N-acetylglucosamine deacetylase activity"/>
    <property type="evidence" value="ECO:0007669"/>
    <property type="project" value="UniProtKB-UniRule"/>
</dbReference>
<dbReference type="GO" id="GO:0009245">
    <property type="term" value="P:lipid A biosynthetic process"/>
    <property type="evidence" value="ECO:0007669"/>
    <property type="project" value="UniProtKB-UniRule"/>
</dbReference>
<dbReference type="FunFam" id="3.30.1700.10:FF:000001">
    <property type="entry name" value="UDP-3-O-acyl-N-acetylglucosamine deacetylase"/>
    <property type="match status" value="1"/>
</dbReference>
<dbReference type="FunFam" id="3.30.230.20:FF:000001">
    <property type="entry name" value="UDP-3-O-acyl-N-acetylglucosamine deacetylase"/>
    <property type="match status" value="1"/>
</dbReference>
<dbReference type="Gene3D" id="3.30.230.20">
    <property type="entry name" value="lpxc deacetylase, domain 1"/>
    <property type="match status" value="1"/>
</dbReference>
<dbReference type="Gene3D" id="3.30.1700.10">
    <property type="entry name" value="lpxc deacetylase, domain 2"/>
    <property type="match status" value="1"/>
</dbReference>
<dbReference type="HAMAP" id="MF_00388">
    <property type="entry name" value="LpxC"/>
    <property type="match status" value="1"/>
</dbReference>
<dbReference type="InterPro" id="IPR020568">
    <property type="entry name" value="Ribosomal_Su5_D2-typ_SF"/>
</dbReference>
<dbReference type="InterPro" id="IPR004463">
    <property type="entry name" value="UDP-acyl_GlcNac_deAcase"/>
</dbReference>
<dbReference type="InterPro" id="IPR011334">
    <property type="entry name" value="UDP-acyl_GlcNac_deAcase_C"/>
</dbReference>
<dbReference type="InterPro" id="IPR015870">
    <property type="entry name" value="UDP-acyl_N-AcGlcN_deAcase_N"/>
</dbReference>
<dbReference type="NCBIfam" id="TIGR00325">
    <property type="entry name" value="lpxC"/>
    <property type="match status" value="1"/>
</dbReference>
<dbReference type="PANTHER" id="PTHR33694">
    <property type="entry name" value="UDP-3-O-ACYL-N-ACETYLGLUCOSAMINE DEACETYLASE 1, MITOCHONDRIAL-RELATED"/>
    <property type="match status" value="1"/>
</dbReference>
<dbReference type="PANTHER" id="PTHR33694:SF1">
    <property type="entry name" value="UDP-3-O-ACYL-N-ACETYLGLUCOSAMINE DEACETYLASE 1, MITOCHONDRIAL-RELATED"/>
    <property type="match status" value="1"/>
</dbReference>
<dbReference type="Pfam" id="PF03331">
    <property type="entry name" value="LpxC"/>
    <property type="match status" value="1"/>
</dbReference>
<dbReference type="SUPFAM" id="SSF54211">
    <property type="entry name" value="Ribosomal protein S5 domain 2-like"/>
    <property type="match status" value="2"/>
</dbReference>
<proteinExistence type="inferred from homology"/>
<keyword id="KW-0378">Hydrolase</keyword>
<keyword id="KW-0441">Lipid A biosynthesis</keyword>
<keyword id="KW-0444">Lipid biosynthesis</keyword>
<keyword id="KW-0443">Lipid metabolism</keyword>
<keyword id="KW-0479">Metal-binding</keyword>
<keyword id="KW-0862">Zinc</keyword>
<reference key="1">
    <citation type="submission" date="2007-08" db="EMBL/GenBank/DDBJ databases">
        <authorList>
            <consortium name="The Vibrio harveyi Genome Sequencing Project"/>
            <person name="Bassler B."/>
            <person name="Clifton S.W."/>
            <person name="Fulton L."/>
            <person name="Delehaunty K."/>
            <person name="Fronick C."/>
            <person name="Harrison M."/>
            <person name="Markivic C."/>
            <person name="Fulton R."/>
            <person name="Tin-Wollam A.-M."/>
            <person name="Shah N."/>
            <person name="Pepin K."/>
            <person name="Nash W."/>
            <person name="Thiruvilangam P."/>
            <person name="Bhonagiri V."/>
            <person name="Waters C."/>
            <person name="Tu K.C."/>
            <person name="Irgon J."/>
            <person name="Wilson R.K."/>
        </authorList>
    </citation>
    <scope>NUCLEOTIDE SEQUENCE [LARGE SCALE GENOMIC DNA]</scope>
    <source>
        <strain>ATCC BAA-1116 / BB120</strain>
    </source>
</reference>
<accession>A7MXQ6</accession>
<feature type="chain" id="PRO_1000013238" description="UDP-3-O-acyl-N-acetylglucosamine deacetylase">
    <location>
        <begin position="1"/>
        <end position="305"/>
    </location>
</feature>
<feature type="active site" description="Proton donor" evidence="1">
    <location>
        <position position="265"/>
    </location>
</feature>
<feature type="binding site" evidence="1">
    <location>
        <position position="79"/>
    </location>
    <ligand>
        <name>Zn(2+)</name>
        <dbReference type="ChEBI" id="CHEBI:29105"/>
    </ligand>
</feature>
<feature type="binding site" evidence="1">
    <location>
        <position position="238"/>
    </location>
    <ligand>
        <name>Zn(2+)</name>
        <dbReference type="ChEBI" id="CHEBI:29105"/>
    </ligand>
</feature>
<feature type="binding site" evidence="1">
    <location>
        <position position="242"/>
    </location>
    <ligand>
        <name>Zn(2+)</name>
        <dbReference type="ChEBI" id="CHEBI:29105"/>
    </ligand>
</feature>
<name>LPXC_VIBC1</name>
<gene>
    <name evidence="1" type="primary">lpxC</name>
    <name type="ordered locus">VIBHAR_00907</name>
</gene>